<name>RL36_BACFN</name>
<organism>
    <name type="scientific">Bacteroides fragilis (strain ATCC 25285 / DSM 2151 / CCUG 4856 / JCM 11019 / LMG 10263 / NCTC 9343 / Onslow / VPI 2553 / EN-2)</name>
    <dbReference type="NCBI Taxonomy" id="272559"/>
    <lineage>
        <taxon>Bacteria</taxon>
        <taxon>Pseudomonadati</taxon>
        <taxon>Bacteroidota</taxon>
        <taxon>Bacteroidia</taxon>
        <taxon>Bacteroidales</taxon>
        <taxon>Bacteroidaceae</taxon>
        <taxon>Bacteroides</taxon>
    </lineage>
</organism>
<accession>Q5L8D2</accession>
<keyword id="KW-0687">Ribonucleoprotein</keyword>
<keyword id="KW-0689">Ribosomal protein</keyword>
<proteinExistence type="inferred from homology"/>
<gene>
    <name evidence="1" type="primary">rpmJ</name>
    <name type="ordered locus">BF3980</name>
</gene>
<feature type="chain" id="PRO_0000302157" description="Large ribosomal subunit protein bL36">
    <location>
        <begin position="1"/>
        <end position="38"/>
    </location>
</feature>
<sequence length="38" mass="4587">MKVRASLKKRTPECKIVRRNGRLYVINKKNPKYKQRQG</sequence>
<evidence type="ECO:0000255" key="1">
    <source>
        <dbReference type="HAMAP-Rule" id="MF_00251"/>
    </source>
</evidence>
<evidence type="ECO:0000305" key="2"/>
<dbReference type="EMBL" id="CR626927">
    <property type="protein sequence ID" value="CAH09656.1"/>
    <property type="molecule type" value="Genomic_DNA"/>
</dbReference>
<dbReference type="SMR" id="Q5L8D2"/>
<dbReference type="PaxDb" id="272559-BF9343_3875"/>
<dbReference type="KEGG" id="bfs:BF9343_3875"/>
<dbReference type="eggNOG" id="COG0257">
    <property type="taxonomic scope" value="Bacteria"/>
</dbReference>
<dbReference type="HOGENOM" id="CLU_135723_3_3_10"/>
<dbReference type="Proteomes" id="UP000006731">
    <property type="component" value="Chromosome"/>
</dbReference>
<dbReference type="GO" id="GO:1990904">
    <property type="term" value="C:ribonucleoprotein complex"/>
    <property type="evidence" value="ECO:0007669"/>
    <property type="project" value="UniProtKB-KW"/>
</dbReference>
<dbReference type="GO" id="GO:0005840">
    <property type="term" value="C:ribosome"/>
    <property type="evidence" value="ECO:0007669"/>
    <property type="project" value="UniProtKB-KW"/>
</dbReference>
<dbReference type="GO" id="GO:0003735">
    <property type="term" value="F:structural constituent of ribosome"/>
    <property type="evidence" value="ECO:0007669"/>
    <property type="project" value="InterPro"/>
</dbReference>
<dbReference type="GO" id="GO:0006412">
    <property type="term" value="P:translation"/>
    <property type="evidence" value="ECO:0007669"/>
    <property type="project" value="UniProtKB-UniRule"/>
</dbReference>
<dbReference type="HAMAP" id="MF_00251">
    <property type="entry name" value="Ribosomal_bL36"/>
    <property type="match status" value="1"/>
</dbReference>
<dbReference type="InterPro" id="IPR000473">
    <property type="entry name" value="Ribosomal_bL36"/>
</dbReference>
<dbReference type="InterPro" id="IPR035977">
    <property type="entry name" value="Ribosomal_bL36_sp"/>
</dbReference>
<dbReference type="InterPro" id="IPR047621">
    <property type="entry name" value="Ribosomal_L36_bact"/>
</dbReference>
<dbReference type="NCBIfam" id="NF002021">
    <property type="entry name" value="PRK00831.1"/>
    <property type="match status" value="1"/>
</dbReference>
<dbReference type="NCBIfam" id="TIGR01022">
    <property type="entry name" value="rpmJ_bact"/>
    <property type="match status" value="1"/>
</dbReference>
<dbReference type="PANTHER" id="PTHR47781">
    <property type="entry name" value="50S RIBOSOMAL PROTEIN L36 2"/>
    <property type="match status" value="1"/>
</dbReference>
<dbReference type="PANTHER" id="PTHR47781:SF1">
    <property type="entry name" value="LARGE RIBOSOMAL SUBUNIT PROTEIN BL36B"/>
    <property type="match status" value="1"/>
</dbReference>
<dbReference type="Pfam" id="PF00444">
    <property type="entry name" value="Ribosomal_L36"/>
    <property type="match status" value="1"/>
</dbReference>
<dbReference type="SUPFAM" id="SSF57840">
    <property type="entry name" value="Ribosomal protein L36"/>
    <property type="match status" value="1"/>
</dbReference>
<comment type="similarity">
    <text evidence="1">Belongs to the bacterial ribosomal protein bL36 family.</text>
</comment>
<reference key="1">
    <citation type="journal article" date="2005" name="Science">
        <title>Extensive DNA inversions in the B. fragilis genome control variable gene expression.</title>
        <authorList>
            <person name="Cerdeno-Tarraga A.-M."/>
            <person name="Patrick S."/>
            <person name="Crossman L.C."/>
            <person name="Blakely G."/>
            <person name="Abratt V."/>
            <person name="Lennard N."/>
            <person name="Poxton I."/>
            <person name="Duerden B."/>
            <person name="Harris B."/>
            <person name="Quail M.A."/>
            <person name="Barron A."/>
            <person name="Clark L."/>
            <person name="Corton C."/>
            <person name="Doggett J."/>
            <person name="Holden M.T.G."/>
            <person name="Larke N."/>
            <person name="Line A."/>
            <person name="Lord A."/>
            <person name="Norbertczak H."/>
            <person name="Ormond D."/>
            <person name="Price C."/>
            <person name="Rabbinowitsch E."/>
            <person name="Woodward J."/>
            <person name="Barrell B.G."/>
            <person name="Parkhill J."/>
        </authorList>
    </citation>
    <scope>NUCLEOTIDE SEQUENCE [LARGE SCALE GENOMIC DNA]</scope>
    <source>
        <strain>ATCC 25285 / DSM 2151 / CCUG 4856 / JCM 11019 / LMG 10263 / NCTC 9343 / Onslow / VPI 2553 / EN-2</strain>
    </source>
</reference>
<protein>
    <recommendedName>
        <fullName evidence="1">Large ribosomal subunit protein bL36</fullName>
    </recommendedName>
    <alternativeName>
        <fullName evidence="2">50S ribosomal protein L36</fullName>
    </alternativeName>
</protein>